<sequence length="447" mass="50612">MSVNLSKNGAALQGAYKDVLDEKTKTDWALYTYEGNSNDIRLAETGDGGLEELVEELSSGKVMYAFCRVKDPNSGLPKFVLVNWTGEGVKDARKGACANHVSTMANFLKGAHVTINARAEEDVEPESIMEKVAKASGANYNFHKESKRGNEGPQGPVGSVYQKTNAMSEIKRVGKENFWAKAEKDEEERRMEENRRANSEKDRLERERKEREQREAETREQRFRERAKEIDAQRKEQEETEKQQTVPASQRSVNPRETFLQKERSLPESGPVSAQPGRLRSPFLQKSACQPESSPPPSPVHRVQEPPSPPVYPAHQTPPESPVPPVSHPPESTVHVKEQCTASQQEEENIYQDATEDQNIYEDTTENQNIYEDTPQEEPVYEIEVEEEKGVCARALYDYQAADDTEISFDPDDLITQIQFIDEGWWRGFSPAGHFGMFPANYVELLE</sequence>
<dbReference type="EMBL" id="BC044296">
    <property type="protein sequence ID" value="AAH44296.1"/>
    <property type="molecule type" value="mRNA"/>
</dbReference>
<dbReference type="RefSeq" id="NP_001080114.1">
    <property type="nucleotide sequence ID" value="NM_001086645.1"/>
</dbReference>
<dbReference type="SMR" id="Q7ZXQ9"/>
<dbReference type="DNASU" id="379806"/>
<dbReference type="GeneID" id="379806"/>
<dbReference type="KEGG" id="xla:379806"/>
<dbReference type="AGR" id="Xenbase:XB-GENE-17339832"/>
<dbReference type="CTD" id="379806"/>
<dbReference type="Xenbase" id="XB-GENE-17339832">
    <property type="gene designation" value="dbnl.L"/>
</dbReference>
<dbReference type="OrthoDB" id="5971719at2759"/>
<dbReference type="Proteomes" id="UP000186698">
    <property type="component" value="Chromosome 3L"/>
</dbReference>
<dbReference type="Bgee" id="379806">
    <property type="expression patterns" value="Expressed in spleen and 20 other cell types or tissues"/>
</dbReference>
<dbReference type="GO" id="GO:0005884">
    <property type="term" value="C:actin filament"/>
    <property type="evidence" value="ECO:0007669"/>
    <property type="project" value="TreeGrafter"/>
</dbReference>
<dbReference type="GO" id="GO:0070161">
    <property type="term" value="C:anchoring junction"/>
    <property type="evidence" value="ECO:0007669"/>
    <property type="project" value="UniProtKB-KW"/>
</dbReference>
<dbReference type="GO" id="GO:0030665">
    <property type="term" value="C:clathrin-coated vesicle membrane"/>
    <property type="evidence" value="ECO:0007669"/>
    <property type="project" value="UniProtKB-SubCell"/>
</dbReference>
<dbReference type="GO" id="GO:0030864">
    <property type="term" value="C:cortical actin cytoskeleton"/>
    <property type="evidence" value="ECO:0000318"/>
    <property type="project" value="GO_Central"/>
</dbReference>
<dbReference type="GO" id="GO:0005829">
    <property type="term" value="C:cytosol"/>
    <property type="evidence" value="ECO:0007669"/>
    <property type="project" value="UniProtKB-SubCell"/>
</dbReference>
<dbReference type="GO" id="GO:0030425">
    <property type="term" value="C:dendrite"/>
    <property type="evidence" value="ECO:0000318"/>
    <property type="project" value="GO_Central"/>
</dbReference>
<dbReference type="GO" id="GO:0005769">
    <property type="term" value="C:early endosome"/>
    <property type="evidence" value="ECO:0007669"/>
    <property type="project" value="UniProtKB-SubCell"/>
</dbReference>
<dbReference type="GO" id="GO:0000139">
    <property type="term" value="C:Golgi membrane"/>
    <property type="evidence" value="ECO:0007669"/>
    <property type="project" value="UniProtKB-SubCell"/>
</dbReference>
<dbReference type="GO" id="GO:0030027">
    <property type="term" value="C:lamellipodium"/>
    <property type="evidence" value="ECO:0000318"/>
    <property type="project" value="GO_Central"/>
</dbReference>
<dbReference type="GO" id="GO:0043204">
    <property type="term" value="C:perikaryon"/>
    <property type="evidence" value="ECO:0007669"/>
    <property type="project" value="UniProtKB-SubCell"/>
</dbReference>
<dbReference type="GO" id="GO:0002102">
    <property type="term" value="C:podosome"/>
    <property type="evidence" value="ECO:0007669"/>
    <property type="project" value="UniProtKB-SubCell"/>
</dbReference>
<dbReference type="GO" id="GO:0014069">
    <property type="term" value="C:postsynaptic density"/>
    <property type="evidence" value="ECO:0000318"/>
    <property type="project" value="GO_Central"/>
</dbReference>
<dbReference type="GO" id="GO:0045211">
    <property type="term" value="C:postsynaptic membrane"/>
    <property type="evidence" value="ECO:0000318"/>
    <property type="project" value="GO_Central"/>
</dbReference>
<dbReference type="GO" id="GO:0001726">
    <property type="term" value="C:ruffle"/>
    <property type="evidence" value="ECO:0007669"/>
    <property type="project" value="UniProtKB-SubCell"/>
</dbReference>
<dbReference type="GO" id="GO:0030427">
    <property type="term" value="C:site of polarized growth"/>
    <property type="evidence" value="ECO:0000318"/>
    <property type="project" value="GO_Central"/>
</dbReference>
<dbReference type="GO" id="GO:0051015">
    <property type="term" value="F:actin filament binding"/>
    <property type="evidence" value="ECO:0000318"/>
    <property type="project" value="GO_Central"/>
</dbReference>
<dbReference type="GO" id="GO:0048812">
    <property type="term" value="P:neuron projection morphogenesis"/>
    <property type="evidence" value="ECO:0000318"/>
    <property type="project" value="GO_Central"/>
</dbReference>
<dbReference type="GO" id="GO:0045773">
    <property type="term" value="P:positive regulation of axon extension"/>
    <property type="evidence" value="ECO:0000318"/>
    <property type="project" value="GO_Central"/>
</dbReference>
<dbReference type="GO" id="GO:0061003">
    <property type="term" value="P:positive regulation of dendritic spine morphogenesis"/>
    <property type="evidence" value="ECO:0000318"/>
    <property type="project" value="GO_Central"/>
</dbReference>
<dbReference type="GO" id="GO:0098974">
    <property type="term" value="P:postsynaptic actin cytoskeleton organization"/>
    <property type="evidence" value="ECO:0000318"/>
    <property type="project" value="GO_Central"/>
</dbReference>
<dbReference type="GO" id="GO:0030833">
    <property type="term" value="P:regulation of actin filament polymerization"/>
    <property type="evidence" value="ECO:0000318"/>
    <property type="project" value="GO_Central"/>
</dbReference>
<dbReference type="CDD" id="cd11281">
    <property type="entry name" value="ADF_drebrin_like"/>
    <property type="match status" value="1"/>
</dbReference>
<dbReference type="CDD" id="cd11960">
    <property type="entry name" value="SH3_Abp1_eu"/>
    <property type="match status" value="1"/>
</dbReference>
<dbReference type="FunFam" id="3.40.20.10:FF:000011">
    <property type="entry name" value="Drebrin-like protein B"/>
    <property type="match status" value="1"/>
</dbReference>
<dbReference type="FunFam" id="2.30.30.40:FF:000046">
    <property type="entry name" value="Drebrin-like protein isoform B"/>
    <property type="match status" value="1"/>
</dbReference>
<dbReference type="Gene3D" id="3.40.20.10">
    <property type="entry name" value="Severin"/>
    <property type="match status" value="1"/>
</dbReference>
<dbReference type="Gene3D" id="2.30.30.40">
    <property type="entry name" value="SH3 Domains"/>
    <property type="match status" value="1"/>
</dbReference>
<dbReference type="InterPro" id="IPR002108">
    <property type="entry name" value="ADF-H"/>
</dbReference>
<dbReference type="InterPro" id="IPR029006">
    <property type="entry name" value="ADF-H/Gelsolin-like_dom_sf"/>
</dbReference>
<dbReference type="InterPro" id="IPR035717">
    <property type="entry name" value="Drebrin-like_SH3"/>
</dbReference>
<dbReference type="InterPro" id="IPR036028">
    <property type="entry name" value="SH3-like_dom_sf"/>
</dbReference>
<dbReference type="InterPro" id="IPR001452">
    <property type="entry name" value="SH3_domain"/>
</dbReference>
<dbReference type="PANTHER" id="PTHR10829">
    <property type="entry name" value="CORTACTIN AND DREBRIN"/>
    <property type="match status" value="1"/>
</dbReference>
<dbReference type="PANTHER" id="PTHR10829:SF12">
    <property type="entry name" value="DREBRIN-LIKE PROTEIN"/>
    <property type="match status" value="1"/>
</dbReference>
<dbReference type="Pfam" id="PF00241">
    <property type="entry name" value="Cofilin_ADF"/>
    <property type="match status" value="1"/>
</dbReference>
<dbReference type="Pfam" id="PF14604">
    <property type="entry name" value="SH3_9"/>
    <property type="match status" value="1"/>
</dbReference>
<dbReference type="PRINTS" id="PR00452">
    <property type="entry name" value="SH3DOMAIN"/>
</dbReference>
<dbReference type="SMART" id="SM00102">
    <property type="entry name" value="ADF"/>
    <property type="match status" value="1"/>
</dbReference>
<dbReference type="SMART" id="SM00326">
    <property type="entry name" value="SH3"/>
    <property type="match status" value="1"/>
</dbReference>
<dbReference type="SUPFAM" id="SSF55753">
    <property type="entry name" value="Actin depolymerizing proteins"/>
    <property type="match status" value="1"/>
</dbReference>
<dbReference type="SUPFAM" id="SSF50044">
    <property type="entry name" value="SH3-domain"/>
    <property type="match status" value="1"/>
</dbReference>
<dbReference type="PROSITE" id="PS51263">
    <property type="entry name" value="ADF_H"/>
    <property type="match status" value="1"/>
</dbReference>
<dbReference type="PROSITE" id="PS50002">
    <property type="entry name" value="SH3"/>
    <property type="match status" value="1"/>
</dbReference>
<proteinExistence type="evidence at transcript level"/>
<gene>
    <name type="primary">dbnl-a</name>
</gene>
<organism>
    <name type="scientific">Xenopus laevis</name>
    <name type="common">African clawed frog</name>
    <dbReference type="NCBI Taxonomy" id="8355"/>
    <lineage>
        <taxon>Eukaryota</taxon>
        <taxon>Metazoa</taxon>
        <taxon>Chordata</taxon>
        <taxon>Craniata</taxon>
        <taxon>Vertebrata</taxon>
        <taxon>Euteleostomi</taxon>
        <taxon>Amphibia</taxon>
        <taxon>Batrachia</taxon>
        <taxon>Anura</taxon>
        <taxon>Pipoidea</taxon>
        <taxon>Pipidae</taxon>
        <taxon>Xenopodinae</taxon>
        <taxon>Xenopus</taxon>
        <taxon>Xenopus</taxon>
    </lineage>
</organism>
<comment type="function">
    <text evidence="1">Adapter protein that binds F-actin and dynamin, and thereby plays a role in receptor-mediated endocytosis. Plays a role in the reorganization of the actin cytoskeleton, formation of cell projections, such as neurites, in neuron morphogenesis and synapse formation. Does not bind G-actin and promote actin polymerization by itself, but excerts its functions by interaction with other proteins. Required for the formation of organized podosome rosettes (By similarity).</text>
</comment>
<comment type="subcellular location">
    <subcellularLocation>
        <location evidence="2">Cytoplasm</location>
        <location evidence="2">Cytoskeleton</location>
    </subcellularLocation>
    <subcellularLocation>
        <location evidence="2">Cell projection</location>
        <location evidence="2">Lamellipodium</location>
    </subcellularLocation>
    <subcellularLocation>
        <location evidence="2">Cell projection</location>
        <location evidence="2">Ruffle</location>
    </subcellularLocation>
    <subcellularLocation>
        <location evidence="2">Cytoplasm</location>
        <location evidence="2">Cell cortex</location>
    </subcellularLocation>
    <subcellularLocation>
        <location evidence="3">Cytoplasm</location>
        <location evidence="3">Cytosol</location>
    </subcellularLocation>
    <subcellularLocation>
        <location evidence="2">Synapse</location>
    </subcellularLocation>
    <subcellularLocation>
        <location evidence="2">Perikaryon</location>
    </subcellularLocation>
    <subcellularLocation>
        <location evidence="2">Cell projection</location>
        <location evidence="2">Neuron projection</location>
    </subcellularLocation>
    <subcellularLocation>
        <location evidence="3">Cell membrane</location>
        <topology evidence="2">Peripheral membrane protein</topology>
        <orientation evidence="2">Cytoplasmic side</orientation>
    </subcellularLocation>
    <subcellularLocation>
        <location evidence="2">Cytoplasmic vesicle</location>
        <location evidence="2">Clathrin-coated vesicle membrane</location>
        <topology evidence="2">Peripheral membrane protein</topology>
        <orientation evidence="2">Cytoplasmic side</orientation>
    </subcellularLocation>
    <subcellularLocation>
        <location evidence="2">Golgi apparatus membrane</location>
        <topology evidence="2">Peripheral membrane protein</topology>
        <orientation evidence="2">Cytoplasmic side</orientation>
    </subcellularLocation>
    <subcellularLocation>
        <location evidence="2">Cell projection</location>
        <location evidence="2">Podosome</location>
    </subcellularLocation>
    <subcellularLocation>
        <location evidence="4">Early endosome</location>
    </subcellularLocation>
    <subcellularLocation>
        <location evidence="3">Cell projection</location>
        <location evidence="3">Dendrite</location>
    </subcellularLocation>
    <subcellularLocation>
        <location evidence="3">Postsynaptic density</location>
    </subcellularLocation>
</comment>
<comment type="similarity">
    <text evidence="9">Belongs to the ABP1 family.</text>
</comment>
<reference key="1">
    <citation type="submission" date="2003-01" db="EMBL/GenBank/DDBJ databases">
        <authorList>
            <consortium name="NIH - Xenopus Gene Collection (XGC) project"/>
        </authorList>
    </citation>
    <scope>NUCLEOTIDE SEQUENCE [LARGE SCALE MRNA]</scope>
    <source>
        <tissue>Embryo</tissue>
    </source>
</reference>
<evidence type="ECO:0000250" key="1"/>
<evidence type="ECO:0000250" key="2">
    <source>
        <dbReference type="UniProtKB" id="Q62418"/>
    </source>
</evidence>
<evidence type="ECO:0000250" key="3">
    <source>
        <dbReference type="UniProtKB" id="Q9JHL4"/>
    </source>
</evidence>
<evidence type="ECO:0000250" key="4">
    <source>
        <dbReference type="UniProtKB" id="Q9UJU6"/>
    </source>
</evidence>
<evidence type="ECO:0000255" key="5"/>
<evidence type="ECO:0000255" key="6">
    <source>
        <dbReference type="PROSITE-ProRule" id="PRU00192"/>
    </source>
</evidence>
<evidence type="ECO:0000255" key="7">
    <source>
        <dbReference type="PROSITE-ProRule" id="PRU00599"/>
    </source>
</evidence>
<evidence type="ECO:0000256" key="8">
    <source>
        <dbReference type="SAM" id="MobiDB-lite"/>
    </source>
</evidence>
<evidence type="ECO:0000305" key="9"/>
<feature type="chain" id="PRO_0000348226" description="Drebrin-like protein A">
    <location>
        <begin position="1"/>
        <end position="447"/>
    </location>
</feature>
<feature type="domain" description="ADF-H" evidence="7">
    <location>
        <begin position="2"/>
        <end position="133"/>
    </location>
</feature>
<feature type="domain" description="SH3" evidence="6">
    <location>
        <begin position="388"/>
        <end position="447"/>
    </location>
</feature>
<feature type="region of interest" description="Disordered" evidence="8">
    <location>
        <begin position="141"/>
        <end position="160"/>
    </location>
</feature>
<feature type="region of interest" description="Disordered" evidence="8">
    <location>
        <begin position="184"/>
        <end position="368"/>
    </location>
</feature>
<feature type="coiled-coil region" evidence="5">
    <location>
        <begin position="180"/>
        <end position="245"/>
    </location>
</feature>
<feature type="compositionally biased region" description="Basic and acidic residues" evidence="8">
    <location>
        <begin position="184"/>
        <end position="242"/>
    </location>
</feature>
<feature type="compositionally biased region" description="Polar residues" evidence="8">
    <location>
        <begin position="246"/>
        <end position="255"/>
    </location>
</feature>
<feature type="compositionally biased region" description="Pro residues" evidence="8">
    <location>
        <begin position="319"/>
        <end position="328"/>
    </location>
</feature>
<feature type="compositionally biased region" description="Acidic residues" evidence="8">
    <location>
        <begin position="345"/>
        <end position="365"/>
    </location>
</feature>
<protein>
    <recommendedName>
        <fullName>Drebrin-like protein A</fullName>
    </recommendedName>
</protein>
<keyword id="KW-0009">Actin-binding</keyword>
<keyword id="KW-0965">Cell junction</keyword>
<keyword id="KW-1003">Cell membrane</keyword>
<keyword id="KW-0966">Cell projection</keyword>
<keyword id="KW-0175">Coiled coil</keyword>
<keyword id="KW-0963">Cytoplasm</keyword>
<keyword id="KW-0968">Cytoplasmic vesicle</keyword>
<keyword id="KW-0206">Cytoskeleton</keyword>
<keyword id="KW-0967">Endosome</keyword>
<keyword id="KW-0333">Golgi apparatus</keyword>
<keyword id="KW-0472">Membrane</keyword>
<keyword id="KW-1185">Reference proteome</keyword>
<keyword id="KW-0728">SH3 domain</keyword>
<keyword id="KW-0770">Synapse</keyword>
<keyword id="KW-0813">Transport</keyword>
<accession>Q7ZXQ9</accession>
<name>DBNLA_XENLA</name>